<comment type="function">
    <text evidence="1">This protein binds directly to 23S ribosomal RNA.</text>
</comment>
<comment type="subunit">
    <text evidence="1">Part of the 50S ribosomal subunit.</text>
</comment>
<comment type="subcellular location">
    <subcellularLocation>
        <location evidence="1">Plastid</location>
        <location evidence="1">Chloroplast</location>
    </subcellularLocation>
</comment>
<comment type="similarity">
    <text evidence="3">Belongs to the universal ribosomal protein uL10 family.</text>
</comment>
<evidence type="ECO:0000250" key="1"/>
<evidence type="ECO:0000303" key="2">
    <source>
    </source>
</evidence>
<evidence type="ECO:0000305" key="3"/>
<organism>
    <name type="scientific">Arabidopsis thaliana</name>
    <name type="common">Mouse-ear cress</name>
    <dbReference type="NCBI Taxonomy" id="3702"/>
    <lineage>
        <taxon>Eukaryota</taxon>
        <taxon>Viridiplantae</taxon>
        <taxon>Streptophyta</taxon>
        <taxon>Embryophyta</taxon>
        <taxon>Tracheophyta</taxon>
        <taxon>Spermatophyta</taxon>
        <taxon>Magnoliopsida</taxon>
        <taxon>eudicotyledons</taxon>
        <taxon>Gunneridae</taxon>
        <taxon>Pentapetalae</taxon>
        <taxon>rosids</taxon>
        <taxon>malvids</taxon>
        <taxon>Brassicales</taxon>
        <taxon>Brassicaceae</taxon>
        <taxon>Camelineae</taxon>
        <taxon>Arabidopsis</taxon>
    </lineage>
</organism>
<name>RK10_ARATH</name>
<sequence length="220" mass="24736">MEVALLSFSSSLSPLCHQRISTLTPKTSNSPNYPRLPVIRSAVSRNKKEETVEAVKSHLENCHLLAAINYKGLTVKQFQDLRRTLPDTTKLIVAKNTLVFKAIEGTKWEALKPCMKGMNAWLFVQTDEIPSAIKPYRSFQKERKLENNDFAGAVFEGKFYAPDNFKVLETMPTRAEVYAKMLGALQSPAINLVTTLQAPAREVIMVLMAYIKKLEDESNA</sequence>
<keyword id="KW-0150">Chloroplast</keyword>
<keyword id="KW-0934">Plastid</keyword>
<keyword id="KW-1185">Reference proteome</keyword>
<keyword id="KW-0687">Ribonucleoprotein</keyword>
<keyword id="KW-0689">Ribosomal protein</keyword>
<keyword id="KW-0694">RNA-binding</keyword>
<keyword id="KW-0699">rRNA-binding</keyword>
<keyword id="KW-0809">Transit peptide</keyword>
<reference key="1">
    <citation type="journal article" date="2000" name="Nature">
        <title>Sequence and analysis of chromosome 5 of the plant Arabidopsis thaliana.</title>
        <authorList>
            <person name="Tabata S."/>
            <person name="Kaneko T."/>
            <person name="Nakamura Y."/>
            <person name="Kotani H."/>
            <person name="Kato T."/>
            <person name="Asamizu E."/>
            <person name="Miyajima N."/>
            <person name="Sasamoto S."/>
            <person name="Kimura T."/>
            <person name="Hosouchi T."/>
            <person name="Kawashima K."/>
            <person name="Kohara M."/>
            <person name="Matsumoto M."/>
            <person name="Matsuno A."/>
            <person name="Muraki A."/>
            <person name="Nakayama S."/>
            <person name="Nakazaki N."/>
            <person name="Naruo K."/>
            <person name="Okumura S."/>
            <person name="Shinpo S."/>
            <person name="Takeuchi C."/>
            <person name="Wada T."/>
            <person name="Watanabe A."/>
            <person name="Yamada M."/>
            <person name="Yasuda M."/>
            <person name="Sato S."/>
            <person name="de la Bastide M."/>
            <person name="Huang E."/>
            <person name="Spiegel L."/>
            <person name="Gnoj L."/>
            <person name="O'Shaughnessy A."/>
            <person name="Preston R."/>
            <person name="Habermann K."/>
            <person name="Murray J."/>
            <person name="Johnson D."/>
            <person name="Rohlfing T."/>
            <person name="Nelson J."/>
            <person name="Stoneking T."/>
            <person name="Pepin K."/>
            <person name="Spieth J."/>
            <person name="Sekhon M."/>
            <person name="Armstrong J."/>
            <person name="Becker M."/>
            <person name="Belter E."/>
            <person name="Cordum H."/>
            <person name="Cordes M."/>
            <person name="Courtney L."/>
            <person name="Courtney W."/>
            <person name="Dante M."/>
            <person name="Du H."/>
            <person name="Edwards J."/>
            <person name="Fryman J."/>
            <person name="Haakensen B."/>
            <person name="Lamar E."/>
            <person name="Latreille P."/>
            <person name="Leonard S."/>
            <person name="Meyer R."/>
            <person name="Mulvaney E."/>
            <person name="Ozersky P."/>
            <person name="Riley A."/>
            <person name="Strowmatt C."/>
            <person name="Wagner-McPherson C."/>
            <person name="Wollam A."/>
            <person name="Yoakum M."/>
            <person name="Bell M."/>
            <person name="Dedhia N."/>
            <person name="Parnell L."/>
            <person name="Shah R."/>
            <person name="Rodriguez M."/>
            <person name="Hoon See L."/>
            <person name="Vil D."/>
            <person name="Baker J."/>
            <person name="Kirchoff K."/>
            <person name="Toth K."/>
            <person name="King L."/>
            <person name="Bahret A."/>
            <person name="Miller B."/>
            <person name="Marra M.A."/>
            <person name="Martienssen R."/>
            <person name="McCombie W.R."/>
            <person name="Wilson R.K."/>
            <person name="Murphy G."/>
            <person name="Bancroft I."/>
            <person name="Volckaert G."/>
            <person name="Wambutt R."/>
            <person name="Duesterhoeft A."/>
            <person name="Stiekema W."/>
            <person name="Pohl T."/>
            <person name="Entian K.-D."/>
            <person name="Terryn N."/>
            <person name="Hartley N."/>
            <person name="Bent E."/>
            <person name="Johnson S."/>
            <person name="Langham S.-A."/>
            <person name="McCullagh B."/>
            <person name="Robben J."/>
            <person name="Grymonprez B."/>
            <person name="Zimmermann W."/>
            <person name="Ramsperger U."/>
            <person name="Wedler H."/>
            <person name="Balke K."/>
            <person name="Wedler E."/>
            <person name="Peters S."/>
            <person name="van Staveren M."/>
            <person name="Dirkse W."/>
            <person name="Mooijman P."/>
            <person name="Klein Lankhorst R."/>
            <person name="Weitzenegger T."/>
            <person name="Bothe G."/>
            <person name="Rose M."/>
            <person name="Hauf J."/>
            <person name="Berneiser S."/>
            <person name="Hempel S."/>
            <person name="Feldpausch M."/>
            <person name="Lamberth S."/>
            <person name="Villarroel R."/>
            <person name="Gielen J."/>
            <person name="Ardiles W."/>
            <person name="Bents O."/>
            <person name="Lemcke K."/>
            <person name="Kolesov G."/>
            <person name="Mayer K.F.X."/>
            <person name="Rudd S."/>
            <person name="Schoof H."/>
            <person name="Schueller C."/>
            <person name="Zaccaria P."/>
            <person name="Mewes H.-W."/>
            <person name="Bevan M."/>
            <person name="Fransz P.F."/>
        </authorList>
    </citation>
    <scope>NUCLEOTIDE SEQUENCE [LARGE SCALE GENOMIC DNA]</scope>
    <source>
        <strain>cv. Columbia</strain>
    </source>
</reference>
<reference key="2">
    <citation type="journal article" date="2017" name="Plant J.">
        <title>Araport11: a complete reannotation of the Arabidopsis thaliana reference genome.</title>
        <authorList>
            <person name="Cheng C.Y."/>
            <person name="Krishnakumar V."/>
            <person name="Chan A.P."/>
            <person name="Thibaud-Nissen F."/>
            <person name="Schobel S."/>
            <person name="Town C.D."/>
        </authorList>
    </citation>
    <scope>GENOME REANNOTATION</scope>
    <source>
        <strain>cv. Columbia</strain>
    </source>
</reference>
<reference key="3">
    <citation type="submission" date="2002-03" db="EMBL/GenBank/DDBJ databases">
        <title>Full-length cDNA from Arabidopsis thaliana.</title>
        <authorList>
            <person name="Brover V.V."/>
            <person name="Troukhan M.E."/>
            <person name="Alexandrov N.A."/>
            <person name="Lu Y.-P."/>
            <person name="Flavell R.B."/>
            <person name="Feldmann K.A."/>
        </authorList>
    </citation>
    <scope>NUCLEOTIDE SEQUENCE [LARGE SCALE MRNA]</scope>
</reference>
<reference key="4">
    <citation type="journal article" date="2023" name="Plant Cell">
        <title>An updated nomenclature for plant ribosomal protein genes.</title>
        <authorList>
            <person name="Scarpin M.R."/>
            <person name="Busche M."/>
            <person name="Martinez R.E."/>
            <person name="Harper L.C."/>
            <person name="Reiser L."/>
            <person name="Szakonyi D."/>
            <person name="Merchante C."/>
            <person name="Lan T."/>
            <person name="Xiong W."/>
            <person name="Mo B."/>
            <person name="Tang G."/>
            <person name="Chen X."/>
            <person name="Bailey-Serres J."/>
            <person name="Browning K.S."/>
            <person name="Brunkard J.O."/>
        </authorList>
    </citation>
    <scope>NOMENCLATURE</scope>
</reference>
<protein>
    <recommendedName>
        <fullName evidence="2">Large ribosomal subunit protein uL10c</fullName>
    </recommendedName>
    <alternativeName>
        <fullName>50S ribosomal protein L10, chloroplastic</fullName>
    </alternativeName>
    <alternativeName>
        <fullName>CL10</fullName>
    </alternativeName>
</protein>
<accession>Q9FY50</accession>
<dbReference type="EMBL" id="AL391710">
    <property type="protein sequence ID" value="CAC05428.1"/>
    <property type="molecule type" value="Genomic_DNA"/>
</dbReference>
<dbReference type="EMBL" id="CP002688">
    <property type="protein sequence ID" value="AED91906.1"/>
    <property type="molecule type" value="Genomic_DNA"/>
</dbReference>
<dbReference type="EMBL" id="AY086884">
    <property type="protein sequence ID" value="AAM63929.1"/>
    <property type="molecule type" value="mRNA"/>
</dbReference>
<dbReference type="RefSeq" id="NP_196855.1">
    <property type="nucleotide sequence ID" value="NM_121354.2"/>
</dbReference>
<dbReference type="SMR" id="Q9FY50"/>
<dbReference type="BioGRID" id="16473">
    <property type="interactions" value="6"/>
</dbReference>
<dbReference type="FunCoup" id="Q9FY50">
    <property type="interactions" value="928"/>
</dbReference>
<dbReference type="STRING" id="3702.Q9FY50"/>
<dbReference type="MetOSite" id="Q9FY50"/>
<dbReference type="PaxDb" id="3702-AT5G13510.1"/>
<dbReference type="ProteomicsDB" id="236191"/>
<dbReference type="EnsemblPlants" id="AT5G13510.1">
    <property type="protein sequence ID" value="AT5G13510.1"/>
    <property type="gene ID" value="AT5G13510"/>
</dbReference>
<dbReference type="GeneID" id="831195"/>
<dbReference type="Gramene" id="AT5G13510.1">
    <property type="protein sequence ID" value="AT5G13510.1"/>
    <property type="gene ID" value="AT5G13510"/>
</dbReference>
<dbReference type="KEGG" id="ath:AT5G13510"/>
<dbReference type="Araport" id="AT5G13510"/>
<dbReference type="TAIR" id="AT5G13510">
    <property type="gene designation" value="EMB3136"/>
</dbReference>
<dbReference type="eggNOG" id="ENOG502S56U">
    <property type="taxonomic scope" value="Eukaryota"/>
</dbReference>
<dbReference type="HOGENOM" id="CLU_092227_4_0_1"/>
<dbReference type="InParanoid" id="Q9FY50"/>
<dbReference type="OMA" id="PLCHQRI"/>
<dbReference type="OrthoDB" id="360689at2759"/>
<dbReference type="PhylomeDB" id="Q9FY50"/>
<dbReference type="CD-CODE" id="4299E36E">
    <property type="entry name" value="Nucleolus"/>
</dbReference>
<dbReference type="PRO" id="PR:Q9FY50"/>
<dbReference type="Proteomes" id="UP000006548">
    <property type="component" value="Chromosome 5"/>
</dbReference>
<dbReference type="ExpressionAtlas" id="Q9FY50">
    <property type="expression patterns" value="baseline and differential"/>
</dbReference>
<dbReference type="GO" id="GO:0009507">
    <property type="term" value="C:chloroplast"/>
    <property type="evidence" value="ECO:0007005"/>
    <property type="project" value="TAIR"/>
</dbReference>
<dbReference type="GO" id="GO:0009941">
    <property type="term" value="C:chloroplast envelope"/>
    <property type="evidence" value="ECO:0007005"/>
    <property type="project" value="TAIR"/>
</dbReference>
<dbReference type="GO" id="GO:0009570">
    <property type="term" value="C:chloroplast stroma"/>
    <property type="evidence" value="ECO:0007005"/>
    <property type="project" value="TAIR"/>
</dbReference>
<dbReference type="GO" id="GO:0022626">
    <property type="term" value="C:cytosolic ribosome"/>
    <property type="evidence" value="ECO:0007005"/>
    <property type="project" value="TAIR"/>
</dbReference>
<dbReference type="GO" id="GO:0009536">
    <property type="term" value="C:plastid"/>
    <property type="evidence" value="ECO:0007005"/>
    <property type="project" value="TAIR"/>
</dbReference>
<dbReference type="GO" id="GO:1990904">
    <property type="term" value="C:ribonucleoprotein complex"/>
    <property type="evidence" value="ECO:0007669"/>
    <property type="project" value="UniProtKB-KW"/>
</dbReference>
<dbReference type="GO" id="GO:0019843">
    <property type="term" value="F:rRNA binding"/>
    <property type="evidence" value="ECO:0007669"/>
    <property type="project" value="UniProtKB-KW"/>
</dbReference>
<dbReference type="CDD" id="cd05797">
    <property type="entry name" value="Ribosomal_L10"/>
    <property type="match status" value="1"/>
</dbReference>
<dbReference type="FunFam" id="3.30.70.1730:FF:000007">
    <property type="entry name" value="50S ribosomal protein L10"/>
    <property type="match status" value="1"/>
</dbReference>
<dbReference type="Gene3D" id="3.30.70.1730">
    <property type="match status" value="1"/>
</dbReference>
<dbReference type="Gene3D" id="6.10.250.290">
    <property type="match status" value="1"/>
</dbReference>
<dbReference type="HAMAP" id="MF_00362">
    <property type="entry name" value="Ribosomal_uL10"/>
    <property type="match status" value="1"/>
</dbReference>
<dbReference type="InterPro" id="IPR001790">
    <property type="entry name" value="Ribosomal_uL10"/>
</dbReference>
<dbReference type="InterPro" id="IPR043141">
    <property type="entry name" value="Ribosomal_uL10-like_sf"/>
</dbReference>
<dbReference type="InterPro" id="IPR022973">
    <property type="entry name" value="Ribosomal_uL10_bac"/>
</dbReference>
<dbReference type="InterPro" id="IPR047865">
    <property type="entry name" value="Ribosomal_uL10_bac_type"/>
</dbReference>
<dbReference type="NCBIfam" id="NF000955">
    <property type="entry name" value="PRK00099.1-1"/>
    <property type="match status" value="1"/>
</dbReference>
<dbReference type="PANTHER" id="PTHR11560">
    <property type="entry name" value="39S RIBOSOMAL PROTEIN L10, MITOCHONDRIAL"/>
    <property type="match status" value="1"/>
</dbReference>
<dbReference type="Pfam" id="PF00466">
    <property type="entry name" value="Ribosomal_L10"/>
    <property type="match status" value="1"/>
</dbReference>
<dbReference type="SUPFAM" id="SSF160369">
    <property type="entry name" value="Ribosomal protein L10-like"/>
    <property type="match status" value="1"/>
</dbReference>
<feature type="transit peptide" description="Chloroplast" evidence="1">
    <location>
        <begin position="1"/>
        <end position="41"/>
    </location>
</feature>
<feature type="chain" id="PRO_0000249187" description="Large ribosomal subunit protein uL10c">
    <location>
        <begin position="42"/>
        <end position="220"/>
    </location>
</feature>
<gene>
    <name type="primary">RPL10</name>
    <name type="ordered locus">At5g13510</name>
    <name type="ORF">T6I14_40</name>
</gene>
<proteinExistence type="evidence at transcript level"/>